<comment type="function">
    <text evidence="1">Specifically catalyzes the cleavage of the D-lactyl ether substituent of MurNAc 6-phosphate, producing GlcNAc 6-phosphate and D-lactate.</text>
</comment>
<comment type="catalytic activity">
    <reaction evidence="1">
        <text>N-acetyl-D-muramate 6-phosphate + H2O = N-acetyl-D-glucosamine 6-phosphate + (R)-lactate</text>
        <dbReference type="Rhea" id="RHEA:26410"/>
        <dbReference type="ChEBI" id="CHEBI:15377"/>
        <dbReference type="ChEBI" id="CHEBI:16004"/>
        <dbReference type="ChEBI" id="CHEBI:57513"/>
        <dbReference type="ChEBI" id="CHEBI:58722"/>
        <dbReference type="EC" id="4.2.1.126"/>
    </reaction>
</comment>
<comment type="pathway">
    <text evidence="1">Amino-sugar metabolism; N-acetylmuramate degradation.</text>
</comment>
<comment type="subunit">
    <text evidence="1">Homodimer.</text>
</comment>
<comment type="miscellaneous">
    <text evidence="1">A lyase-type mechanism (elimination/hydration) is suggested for the cleavage of the lactyl ether bond of MurNAc 6-phosphate, with the formation of an alpha,beta-unsaturated aldehyde intermediate with (E)-stereochemistry, followed by the syn addition of water to give product.</text>
</comment>
<comment type="similarity">
    <text evidence="1">Belongs to the GCKR-like family. MurNAc-6-P etherase subfamily.</text>
</comment>
<gene>
    <name evidence="1" type="primary">murQ</name>
    <name type="ordered locus">LJ_1819</name>
</gene>
<dbReference type="EC" id="4.2.1.126" evidence="1"/>
<dbReference type="EMBL" id="AE017198">
    <property type="protein sequence ID" value="AAS09764.1"/>
    <property type="molecule type" value="Genomic_DNA"/>
</dbReference>
<dbReference type="RefSeq" id="WP_011162597.1">
    <property type="nucleotide sequence ID" value="NC_005362.1"/>
</dbReference>
<dbReference type="SMR" id="Q74HC8"/>
<dbReference type="KEGG" id="ljo:LJ_1819"/>
<dbReference type="PATRIC" id="fig|257314.6.peg.1820"/>
<dbReference type="eggNOG" id="COG2103">
    <property type="taxonomic scope" value="Bacteria"/>
</dbReference>
<dbReference type="HOGENOM" id="CLU_049049_1_1_9"/>
<dbReference type="UniPathway" id="UPA00342"/>
<dbReference type="Proteomes" id="UP000000581">
    <property type="component" value="Chromosome"/>
</dbReference>
<dbReference type="GO" id="GO:0097367">
    <property type="term" value="F:carbohydrate derivative binding"/>
    <property type="evidence" value="ECO:0007669"/>
    <property type="project" value="InterPro"/>
</dbReference>
<dbReference type="GO" id="GO:0016835">
    <property type="term" value="F:carbon-oxygen lyase activity"/>
    <property type="evidence" value="ECO:0007669"/>
    <property type="project" value="UniProtKB-UniRule"/>
</dbReference>
<dbReference type="GO" id="GO:0016803">
    <property type="term" value="F:ether hydrolase activity"/>
    <property type="evidence" value="ECO:0007669"/>
    <property type="project" value="TreeGrafter"/>
</dbReference>
<dbReference type="GO" id="GO:0046348">
    <property type="term" value="P:amino sugar catabolic process"/>
    <property type="evidence" value="ECO:0007669"/>
    <property type="project" value="InterPro"/>
</dbReference>
<dbReference type="GO" id="GO:0097173">
    <property type="term" value="P:N-acetylmuramic acid catabolic process"/>
    <property type="evidence" value="ECO:0007669"/>
    <property type="project" value="UniProtKB-UniPathway"/>
</dbReference>
<dbReference type="GO" id="GO:0009254">
    <property type="term" value="P:peptidoglycan turnover"/>
    <property type="evidence" value="ECO:0007669"/>
    <property type="project" value="TreeGrafter"/>
</dbReference>
<dbReference type="CDD" id="cd05007">
    <property type="entry name" value="SIS_Etherase"/>
    <property type="match status" value="1"/>
</dbReference>
<dbReference type="FunFam" id="3.40.50.10490:FF:000014">
    <property type="entry name" value="N-acetylmuramic acid 6-phosphate etherase"/>
    <property type="match status" value="1"/>
</dbReference>
<dbReference type="Gene3D" id="1.10.8.1080">
    <property type="match status" value="1"/>
</dbReference>
<dbReference type="Gene3D" id="3.40.50.10490">
    <property type="entry name" value="Glucose-6-phosphate isomerase like protein, domain 1"/>
    <property type="match status" value="2"/>
</dbReference>
<dbReference type="HAMAP" id="MF_00068">
    <property type="entry name" value="MurQ"/>
    <property type="match status" value="1"/>
</dbReference>
<dbReference type="InterPro" id="IPR005488">
    <property type="entry name" value="Etherase_MurQ"/>
</dbReference>
<dbReference type="InterPro" id="IPR005486">
    <property type="entry name" value="Glucokinase_regulatory_CS"/>
</dbReference>
<dbReference type="InterPro" id="IPR040190">
    <property type="entry name" value="MURQ/GCKR"/>
</dbReference>
<dbReference type="InterPro" id="IPR001347">
    <property type="entry name" value="SIS_dom"/>
</dbReference>
<dbReference type="InterPro" id="IPR046348">
    <property type="entry name" value="SIS_dom_sf"/>
</dbReference>
<dbReference type="NCBIfam" id="TIGR00274">
    <property type="entry name" value="N-acetylmuramic acid 6-phosphate etherase"/>
    <property type="match status" value="1"/>
</dbReference>
<dbReference type="NCBIfam" id="NF003915">
    <property type="entry name" value="PRK05441.1"/>
    <property type="match status" value="1"/>
</dbReference>
<dbReference type="NCBIfam" id="NF009222">
    <property type="entry name" value="PRK12570.1"/>
    <property type="match status" value="1"/>
</dbReference>
<dbReference type="PANTHER" id="PTHR10088">
    <property type="entry name" value="GLUCOKINASE REGULATORY PROTEIN"/>
    <property type="match status" value="1"/>
</dbReference>
<dbReference type="PANTHER" id="PTHR10088:SF4">
    <property type="entry name" value="GLUCOKINASE REGULATORY PROTEIN"/>
    <property type="match status" value="1"/>
</dbReference>
<dbReference type="Pfam" id="PF22645">
    <property type="entry name" value="GKRP_SIS_N"/>
    <property type="match status" value="1"/>
</dbReference>
<dbReference type="SUPFAM" id="SSF53697">
    <property type="entry name" value="SIS domain"/>
    <property type="match status" value="1"/>
</dbReference>
<dbReference type="PROSITE" id="PS01272">
    <property type="entry name" value="GCKR"/>
    <property type="match status" value="1"/>
</dbReference>
<dbReference type="PROSITE" id="PS51464">
    <property type="entry name" value="SIS"/>
    <property type="match status" value="1"/>
</dbReference>
<accession>Q74HC8</accession>
<proteinExistence type="inferred from homology"/>
<feature type="chain" id="PRO_0000249630" description="N-acetylmuramic acid 6-phosphate etherase">
    <location>
        <begin position="1"/>
        <end position="298"/>
    </location>
</feature>
<feature type="domain" description="SIS" evidence="1">
    <location>
        <begin position="55"/>
        <end position="218"/>
    </location>
</feature>
<feature type="active site" description="Proton donor" evidence="1">
    <location>
        <position position="83"/>
    </location>
</feature>
<feature type="active site" evidence="1">
    <location>
        <position position="114"/>
    </location>
</feature>
<reference key="1">
    <citation type="journal article" date="2004" name="Proc. Natl. Acad. Sci. U.S.A.">
        <title>The genome sequence of the probiotic intestinal bacterium Lactobacillus johnsonii NCC 533.</title>
        <authorList>
            <person name="Pridmore R.D."/>
            <person name="Berger B."/>
            <person name="Desiere F."/>
            <person name="Vilanova D."/>
            <person name="Barretto C."/>
            <person name="Pittet A.-C."/>
            <person name="Zwahlen M.-C."/>
            <person name="Rouvet M."/>
            <person name="Altermann E."/>
            <person name="Barrangou R."/>
            <person name="Mollet B."/>
            <person name="Mercenier A."/>
            <person name="Klaenhammer T."/>
            <person name="Arigoni F."/>
            <person name="Schell M.A."/>
        </authorList>
    </citation>
    <scope>NUCLEOTIDE SEQUENCE [LARGE SCALE GENOMIC DNA]</scope>
    <source>
        <strain>CNCM I-1225 / La1 / NCC 533</strain>
    </source>
</reference>
<evidence type="ECO:0000255" key="1">
    <source>
        <dbReference type="HAMAP-Rule" id="MF_00068"/>
    </source>
</evidence>
<keyword id="KW-0119">Carbohydrate metabolism</keyword>
<keyword id="KW-0456">Lyase</keyword>
<protein>
    <recommendedName>
        <fullName evidence="1">N-acetylmuramic acid 6-phosphate etherase</fullName>
        <shortName evidence="1">MurNAc-6-P etherase</shortName>
        <ecNumber evidence="1">4.2.1.126</ecNumber>
    </recommendedName>
    <alternativeName>
        <fullName evidence="1">N-acetylmuramic acid 6-phosphate hydrolase</fullName>
    </alternativeName>
    <alternativeName>
        <fullName evidence="1">N-acetylmuramic acid 6-phosphate lyase</fullName>
    </alternativeName>
</protein>
<organism>
    <name type="scientific">Lactobacillus johnsonii (strain CNCM I-12250 / La1 / NCC 533)</name>
    <dbReference type="NCBI Taxonomy" id="257314"/>
    <lineage>
        <taxon>Bacteria</taxon>
        <taxon>Bacillati</taxon>
        <taxon>Bacillota</taxon>
        <taxon>Bacilli</taxon>
        <taxon>Lactobacillales</taxon>
        <taxon>Lactobacillaceae</taxon>
        <taxon>Lactobacillus</taxon>
    </lineage>
</organism>
<sequence length="298" mass="32108">MNIKDLTTEQRNPKSLHIDSATPLEIVKIINQEDKKIADAVGTQDKEIAKAIEYASKRYREGGRLIYVGAGTSGRLGILDAVELVPTYRINPERAIGLIAGGQSAMFRAVEGAEDDLQLGEKDLKDLKLNEKDIVIGLAASGRTPYVIGCLKYANQVKALTISIACVKKSEIGKYADIAIEAVVGPEVITGSTRMKAGTAQKMILNMISTGVMIKQGKVYENVMVDVMPTNSKLVDRACRIIEVATGVSESVASDTLEKADMNVAVAITMLKTGVDKEKAMDILKECNGNISSVVNNY</sequence>
<name>MURQ_LACJO</name>